<gene>
    <name type="primary">alr</name>
</gene>
<name>ALR_PISSA</name>
<keyword id="KW-0413">Isomerase</keyword>
<keyword id="KW-0663">Pyridoxal phosphate</keyword>
<accession>Q9F9L1</accession>
<sequence>NSAAIFNFSYERYDWVRPGIMLYGISPFADKNGVDLELQPVMHVVSRLISVKQLRQGESVGYGATWQCPEDMQVGILSLGYGDGYPRLAASGTPFLVRGQRCALIGRVSMDMIAIDLRRCPDAGVGEAVTVWGQDLPVEEIARHVGTIAYELVCNMPLRAPYIWQE</sequence>
<reference key="1">
    <citation type="submission" date="1999-09" db="EMBL/GenBank/DDBJ databases">
        <title>Identification of a genus-common Rickettsial surface antigen in the salmonid pathogen Piscirickettsia salmonis.</title>
        <authorList>
            <person name="Kuzyk M.A."/>
            <person name="Burian J."/>
            <person name="Thornton J.C."/>
            <person name="Kay W.W."/>
        </authorList>
    </citation>
    <scope>NUCLEOTIDE SEQUENCE [GENOMIC DNA]</scope>
    <source>
        <strain>LF-89</strain>
    </source>
</reference>
<protein>
    <recommendedName>
        <fullName>Alanine racemase</fullName>
        <ecNumber>5.1.1.1</ecNumber>
    </recommendedName>
</protein>
<evidence type="ECO:0000250" key="1"/>
<evidence type="ECO:0000305" key="2"/>
<feature type="chain" id="PRO_0000114545" description="Alanine racemase">
    <location>
        <begin position="1" status="less than"/>
        <end position="166"/>
    </location>
</feature>
<feature type="active site" description="Proton acceptor; specific for L-alanine" evidence="1">
    <location>
        <position position="62"/>
    </location>
</feature>
<feature type="binding site" evidence="1">
    <location>
        <position position="110"/>
    </location>
    <ligand>
        <name>substrate</name>
    </ligand>
</feature>
<feature type="non-terminal residue">
    <location>
        <position position="1"/>
    </location>
</feature>
<comment type="function">
    <text evidence="1">Catalyzes the interconversion of L-alanine and D-alanine. May also act on other amino acids (By similarity).</text>
</comment>
<comment type="catalytic activity">
    <reaction>
        <text>L-alanine = D-alanine</text>
        <dbReference type="Rhea" id="RHEA:20249"/>
        <dbReference type="ChEBI" id="CHEBI:57416"/>
        <dbReference type="ChEBI" id="CHEBI:57972"/>
        <dbReference type="EC" id="5.1.1.1"/>
    </reaction>
</comment>
<comment type="cofactor">
    <cofactor evidence="1">
        <name>pyridoxal 5'-phosphate</name>
        <dbReference type="ChEBI" id="CHEBI:597326"/>
    </cofactor>
</comment>
<comment type="pathway">
    <text>Amino-acid biosynthesis; D-alanine biosynthesis; D-alanine from L-alanine: step 1/1.</text>
</comment>
<comment type="similarity">
    <text evidence="2">Belongs to the alanine racemase family.</text>
</comment>
<organism>
    <name type="scientific">Piscirickettsia salmonis</name>
    <dbReference type="NCBI Taxonomy" id="1238"/>
    <lineage>
        <taxon>Bacteria</taxon>
        <taxon>Pseudomonadati</taxon>
        <taxon>Pseudomonadota</taxon>
        <taxon>Gammaproteobacteria</taxon>
        <taxon>Thiotrichales</taxon>
        <taxon>Piscirickettsiaceae</taxon>
        <taxon>Piscirickettsia</taxon>
    </lineage>
</organism>
<dbReference type="EC" id="5.1.1.1"/>
<dbReference type="EMBL" id="AF184152">
    <property type="protein sequence ID" value="AAG17001.1"/>
    <property type="molecule type" value="Genomic_DNA"/>
</dbReference>
<dbReference type="SMR" id="Q9F9L1"/>
<dbReference type="STRING" id="1238.AWJ11_09965"/>
<dbReference type="UniPathway" id="UPA00042">
    <property type="reaction ID" value="UER00497"/>
</dbReference>
<dbReference type="GO" id="GO:0005829">
    <property type="term" value="C:cytosol"/>
    <property type="evidence" value="ECO:0007669"/>
    <property type="project" value="TreeGrafter"/>
</dbReference>
<dbReference type="GO" id="GO:0008784">
    <property type="term" value="F:alanine racemase activity"/>
    <property type="evidence" value="ECO:0007669"/>
    <property type="project" value="UniProtKB-EC"/>
</dbReference>
<dbReference type="GO" id="GO:0030170">
    <property type="term" value="F:pyridoxal phosphate binding"/>
    <property type="evidence" value="ECO:0007669"/>
    <property type="project" value="TreeGrafter"/>
</dbReference>
<dbReference type="GO" id="GO:0030632">
    <property type="term" value="P:D-alanine biosynthetic process"/>
    <property type="evidence" value="ECO:0007669"/>
    <property type="project" value="UniProtKB-UniPathway"/>
</dbReference>
<dbReference type="FunFam" id="2.40.37.10:FF:000002">
    <property type="entry name" value="Alanine racemase"/>
    <property type="match status" value="1"/>
</dbReference>
<dbReference type="Gene3D" id="3.20.20.10">
    <property type="entry name" value="Alanine racemase"/>
    <property type="match status" value="1"/>
</dbReference>
<dbReference type="Gene3D" id="2.40.37.10">
    <property type="entry name" value="Lyase, Ornithine Decarboxylase, Chain A, domain 1"/>
    <property type="match status" value="1"/>
</dbReference>
<dbReference type="InterPro" id="IPR000821">
    <property type="entry name" value="Ala_racemase"/>
</dbReference>
<dbReference type="InterPro" id="IPR009006">
    <property type="entry name" value="Ala_racemase/Decarboxylase_C"/>
</dbReference>
<dbReference type="InterPro" id="IPR011079">
    <property type="entry name" value="Ala_racemase_C"/>
</dbReference>
<dbReference type="InterPro" id="IPR001608">
    <property type="entry name" value="Ala_racemase_N"/>
</dbReference>
<dbReference type="InterPro" id="IPR029066">
    <property type="entry name" value="PLP-binding_barrel"/>
</dbReference>
<dbReference type="NCBIfam" id="TIGR00492">
    <property type="entry name" value="alr"/>
    <property type="match status" value="1"/>
</dbReference>
<dbReference type="PANTHER" id="PTHR30511">
    <property type="entry name" value="ALANINE RACEMASE"/>
    <property type="match status" value="1"/>
</dbReference>
<dbReference type="PANTHER" id="PTHR30511:SF4">
    <property type="entry name" value="ALANINE RACEMASE, BIOSYNTHETIC"/>
    <property type="match status" value="1"/>
</dbReference>
<dbReference type="Pfam" id="PF00842">
    <property type="entry name" value="Ala_racemase_C"/>
    <property type="match status" value="1"/>
</dbReference>
<dbReference type="Pfam" id="PF01168">
    <property type="entry name" value="Ala_racemase_N"/>
    <property type="match status" value="1"/>
</dbReference>
<dbReference type="PRINTS" id="PR00992">
    <property type="entry name" value="ALARACEMASE"/>
</dbReference>
<dbReference type="SMART" id="SM01005">
    <property type="entry name" value="Ala_racemase_C"/>
    <property type="match status" value="1"/>
</dbReference>
<dbReference type="SUPFAM" id="SSF50621">
    <property type="entry name" value="Alanine racemase C-terminal domain-like"/>
    <property type="match status" value="1"/>
</dbReference>
<dbReference type="SUPFAM" id="SSF51419">
    <property type="entry name" value="PLP-binding barrel"/>
    <property type="match status" value="1"/>
</dbReference>
<proteinExistence type="inferred from homology"/>